<comment type="function">
    <text evidence="1">Involved in the glycolate utilization. Catalyzes the condensation and subsequent hydrolysis of acetyl-coenzyme A (acetyl-CoA) and glyoxylate to form malate and CoA.</text>
</comment>
<comment type="catalytic activity">
    <reaction evidence="1">
        <text>glyoxylate + acetyl-CoA + H2O = (S)-malate + CoA + H(+)</text>
        <dbReference type="Rhea" id="RHEA:18181"/>
        <dbReference type="ChEBI" id="CHEBI:15377"/>
        <dbReference type="ChEBI" id="CHEBI:15378"/>
        <dbReference type="ChEBI" id="CHEBI:15589"/>
        <dbReference type="ChEBI" id="CHEBI:36655"/>
        <dbReference type="ChEBI" id="CHEBI:57287"/>
        <dbReference type="ChEBI" id="CHEBI:57288"/>
        <dbReference type="EC" id="2.3.3.9"/>
    </reaction>
</comment>
<comment type="cofactor">
    <cofactor evidence="1">
        <name>Mg(2+)</name>
        <dbReference type="ChEBI" id="CHEBI:18420"/>
    </cofactor>
</comment>
<comment type="pathway">
    <text evidence="1">Carbohydrate metabolism; glyoxylate cycle; (S)-malate from isocitrate: step 2/2.</text>
</comment>
<comment type="subunit">
    <text evidence="1">Monomer.</text>
</comment>
<comment type="subcellular location">
    <subcellularLocation>
        <location evidence="1">Cytoplasm</location>
    </subcellularLocation>
</comment>
<comment type="similarity">
    <text evidence="1">Belongs to the malate synthase family. GlcB subfamily.</text>
</comment>
<reference key="1">
    <citation type="journal article" date="2003" name="Nat. Genet.">
        <title>Comparative analysis of the genome sequences of Bordetella pertussis, Bordetella parapertussis and Bordetella bronchiseptica.</title>
        <authorList>
            <person name="Parkhill J."/>
            <person name="Sebaihia M."/>
            <person name="Preston A."/>
            <person name="Murphy L.D."/>
            <person name="Thomson N.R."/>
            <person name="Harris D.E."/>
            <person name="Holden M.T.G."/>
            <person name="Churcher C.M."/>
            <person name="Bentley S.D."/>
            <person name="Mungall K.L."/>
            <person name="Cerdeno-Tarraga A.-M."/>
            <person name="Temple L."/>
            <person name="James K.D."/>
            <person name="Harris B."/>
            <person name="Quail M.A."/>
            <person name="Achtman M."/>
            <person name="Atkin R."/>
            <person name="Baker S."/>
            <person name="Basham D."/>
            <person name="Bason N."/>
            <person name="Cherevach I."/>
            <person name="Chillingworth T."/>
            <person name="Collins M."/>
            <person name="Cronin A."/>
            <person name="Davis P."/>
            <person name="Doggett J."/>
            <person name="Feltwell T."/>
            <person name="Goble A."/>
            <person name="Hamlin N."/>
            <person name="Hauser H."/>
            <person name="Holroyd S."/>
            <person name="Jagels K."/>
            <person name="Leather S."/>
            <person name="Moule S."/>
            <person name="Norberczak H."/>
            <person name="O'Neil S."/>
            <person name="Ormond D."/>
            <person name="Price C."/>
            <person name="Rabbinowitsch E."/>
            <person name="Rutter S."/>
            <person name="Sanders M."/>
            <person name="Saunders D."/>
            <person name="Seeger K."/>
            <person name="Sharp S."/>
            <person name="Simmonds M."/>
            <person name="Skelton J."/>
            <person name="Squares R."/>
            <person name="Squares S."/>
            <person name="Stevens K."/>
            <person name="Unwin L."/>
            <person name="Whitehead S."/>
            <person name="Barrell B.G."/>
            <person name="Maskell D.J."/>
        </authorList>
    </citation>
    <scope>NUCLEOTIDE SEQUENCE [LARGE SCALE GENOMIC DNA]</scope>
    <source>
        <strain>Tohama I / ATCC BAA-589 / NCTC 13251</strain>
    </source>
</reference>
<protein>
    <recommendedName>
        <fullName evidence="1">Malate synthase G</fullName>
        <ecNumber evidence="1">2.3.3.9</ecNumber>
    </recommendedName>
</protein>
<proteinExistence type="inferred from homology"/>
<keyword id="KW-0963">Cytoplasm</keyword>
<keyword id="KW-0329">Glyoxylate bypass</keyword>
<keyword id="KW-0460">Magnesium</keyword>
<keyword id="KW-0479">Metal-binding</keyword>
<keyword id="KW-0558">Oxidation</keyword>
<keyword id="KW-1185">Reference proteome</keyword>
<keyword id="KW-0808">Transferase</keyword>
<keyword id="KW-0816">Tricarboxylic acid cycle</keyword>
<accession>Q7VT71</accession>
<organism>
    <name type="scientific">Bordetella pertussis (strain Tohama I / ATCC BAA-589 / NCTC 13251)</name>
    <dbReference type="NCBI Taxonomy" id="257313"/>
    <lineage>
        <taxon>Bacteria</taxon>
        <taxon>Pseudomonadati</taxon>
        <taxon>Pseudomonadota</taxon>
        <taxon>Betaproteobacteria</taxon>
        <taxon>Burkholderiales</taxon>
        <taxon>Alcaligenaceae</taxon>
        <taxon>Bordetella</taxon>
    </lineage>
</organism>
<sequence>MTERIPHHGLQVAASLHRFIEDEALSGSGLAPDEFWAGFAALVRDLAPRNRELLAERDRLQGEIDAWHRAHPGPVRDSAGYQALLERIGYLQPQPAQVTASTRDVDSEIASQAGPQLVVPVSNARYALNAANARWGSLYDALYGTDAIPPVAGDDGKGYNPARGEAVIARARAFLDEAAPLAQGSHADATAYAIEGGKLVVTLGAGQRTGLRNPAQLAGYQGDASQPAAVLLANNGLHFEIQIDRQHQIGATDAAGVKDVLLEAALTTIMDCEDSVAAVDADDKVLIYRNWLGLMKGDLSESVTKGGKTFTRRLNADRQYHKPDGGTLTLHGRSLMFVRNVGHLMTNPAILDEQGSEVPEGILDAVITSLAALPDRANRLNSRTGSIYIVKPKMHGPAEAAFANELFDRVEDLLKLPRHTIKMGIMDEERRTSVNLKACIAAAAARVAFINTGFLDRTGDEMHTGMEAGPMLRKGDMKSSAWITAYERNNVLVGLDCGLRGRAQIGKGMWAMPDMMAAMLEQKIGHPKAGANTAWVPSPTAATLHAMHYHQVDVAAVQQALEQTRYDSVRDELLAGLLTVPVGDPAAWSADDIQRELDNNAQGILGYVVRWIDQGVGCSKVPDINNVGLMEDRATLRISSQHIANWLRHGIVDRAQVNATFERMAKVVDQQNAGDPNYLPMAGHFDTSFAYRAACALVFEGLTQPNGYTEPLLHEYRQAFKAARR</sequence>
<dbReference type="EC" id="2.3.3.9" evidence="1"/>
<dbReference type="EMBL" id="BX640422">
    <property type="protein sequence ID" value="CAE43937.1"/>
    <property type="molecule type" value="Genomic_DNA"/>
</dbReference>
<dbReference type="RefSeq" id="NP_882187.1">
    <property type="nucleotide sequence ID" value="NC_002929.2"/>
</dbReference>
<dbReference type="RefSeq" id="WP_010931587.1">
    <property type="nucleotide sequence ID" value="NZ_CP039022.1"/>
</dbReference>
<dbReference type="SMR" id="Q7VT71"/>
<dbReference type="STRING" id="257313.BP3680"/>
<dbReference type="PaxDb" id="257313-BP3680"/>
<dbReference type="KEGG" id="bpe:BP3680"/>
<dbReference type="PATRIC" id="fig|257313.5.peg.3981"/>
<dbReference type="eggNOG" id="COG2225">
    <property type="taxonomic scope" value="Bacteria"/>
</dbReference>
<dbReference type="HOGENOM" id="CLU_028446_1_0_4"/>
<dbReference type="UniPathway" id="UPA00703">
    <property type="reaction ID" value="UER00720"/>
</dbReference>
<dbReference type="Proteomes" id="UP000002676">
    <property type="component" value="Chromosome"/>
</dbReference>
<dbReference type="GO" id="GO:0005829">
    <property type="term" value="C:cytosol"/>
    <property type="evidence" value="ECO:0007669"/>
    <property type="project" value="TreeGrafter"/>
</dbReference>
<dbReference type="GO" id="GO:0000287">
    <property type="term" value="F:magnesium ion binding"/>
    <property type="evidence" value="ECO:0007669"/>
    <property type="project" value="TreeGrafter"/>
</dbReference>
<dbReference type="GO" id="GO:0004474">
    <property type="term" value="F:malate synthase activity"/>
    <property type="evidence" value="ECO:0007669"/>
    <property type="project" value="UniProtKB-UniRule"/>
</dbReference>
<dbReference type="GO" id="GO:0009436">
    <property type="term" value="P:glyoxylate catabolic process"/>
    <property type="evidence" value="ECO:0007669"/>
    <property type="project" value="TreeGrafter"/>
</dbReference>
<dbReference type="GO" id="GO:0006097">
    <property type="term" value="P:glyoxylate cycle"/>
    <property type="evidence" value="ECO:0007669"/>
    <property type="project" value="UniProtKB-UniRule"/>
</dbReference>
<dbReference type="GO" id="GO:0006099">
    <property type="term" value="P:tricarboxylic acid cycle"/>
    <property type="evidence" value="ECO:0007669"/>
    <property type="project" value="UniProtKB-KW"/>
</dbReference>
<dbReference type="FunFam" id="3.20.20.360:FF:000002">
    <property type="entry name" value="Malate synthase G"/>
    <property type="match status" value="1"/>
</dbReference>
<dbReference type="Gene3D" id="3.20.20.360">
    <property type="entry name" value="Malate synthase, domain 3"/>
    <property type="match status" value="2"/>
</dbReference>
<dbReference type="Gene3D" id="1.20.1220.12">
    <property type="entry name" value="Malate synthase, domain III"/>
    <property type="match status" value="1"/>
</dbReference>
<dbReference type="HAMAP" id="MF_00641">
    <property type="entry name" value="Malate_synth_G"/>
    <property type="match status" value="1"/>
</dbReference>
<dbReference type="InterPro" id="IPR044856">
    <property type="entry name" value="Malate_synth_C_sf"/>
</dbReference>
<dbReference type="InterPro" id="IPR011076">
    <property type="entry name" value="Malate_synth_sf"/>
</dbReference>
<dbReference type="InterPro" id="IPR001465">
    <property type="entry name" value="Malate_synthase_TIM"/>
</dbReference>
<dbReference type="InterPro" id="IPR006253">
    <property type="entry name" value="Malate_synthG"/>
</dbReference>
<dbReference type="InterPro" id="IPR048355">
    <property type="entry name" value="MS_C"/>
</dbReference>
<dbReference type="InterPro" id="IPR048356">
    <property type="entry name" value="MS_N"/>
</dbReference>
<dbReference type="InterPro" id="IPR046363">
    <property type="entry name" value="MS_N_TIM-barrel_dom"/>
</dbReference>
<dbReference type="InterPro" id="IPR048357">
    <property type="entry name" value="MSG_insertion"/>
</dbReference>
<dbReference type="NCBIfam" id="TIGR01345">
    <property type="entry name" value="malate_syn_G"/>
    <property type="match status" value="1"/>
</dbReference>
<dbReference type="NCBIfam" id="NF002825">
    <property type="entry name" value="PRK02999.1"/>
    <property type="match status" value="1"/>
</dbReference>
<dbReference type="PANTHER" id="PTHR42739">
    <property type="entry name" value="MALATE SYNTHASE G"/>
    <property type="match status" value="1"/>
</dbReference>
<dbReference type="PANTHER" id="PTHR42739:SF1">
    <property type="entry name" value="MALATE SYNTHASE G"/>
    <property type="match status" value="1"/>
</dbReference>
<dbReference type="Pfam" id="PF20659">
    <property type="entry name" value="MS_C"/>
    <property type="match status" value="1"/>
</dbReference>
<dbReference type="Pfam" id="PF20656">
    <property type="entry name" value="MS_N"/>
    <property type="match status" value="1"/>
</dbReference>
<dbReference type="Pfam" id="PF01274">
    <property type="entry name" value="MS_TIM-barrel"/>
    <property type="match status" value="1"/>
</dbReference>
<dbReference type="Pfam" id="PF20658">
    <property type="entry name" value="MSG_insertion"/>
    <property type="match status" value="1"/>
</dbReference>
<dbReference type="SUPFAM" id="SSF51645">
    <property type="entry name" value="Malate synthase G"/>
    <property type="match status" value="1"/>
</dbReference>
<evidence type="ECO:0000255" key="1">
    <source>
        <dbReference type="HAMAP-Rule" id="MF_00641"/>
    </source>
</evidence>
<gene>
    <name evidence="1" type="primary">glcB</name>
    <name type="ordered locus">BP3680</name>
</gene>
<feature type="chain" id="PRO_1000056895" description="Malate synthase G">
    <location>
        <begin position="1"/>
        <end position="725"/>
    </location>
</feature>
<feature type="active site" description="Proton acceptor" evidence="1">
    <location>
        <position position="339"/>
    </location>
</feature>
<feature type="active site" description="Proton donor" evidence="1">
    <location>
        <position position="632"/>
    </location>
</feature>
<feature type="binding site" evidence="1">
    <location>
        <position position="118"/>
    </location>
    <ligand>
        <name>acetyl-CoA</name>
        <dbReference type="ChEBI" id="CHEBI:57288"/>
    </ligand>
</feature>
<feature type="binding site" evidence="1">
    <location>
        <begin position="125"/>
        <end position="126"/>
    </location>
    <ligand>
        <name>acetyl-CoA</name>
        <dbReference type="ChEBI" id="CHEBI:57288"/>
    </ligand>
</feature>
<feature type="binding site" evidence="1">
    <location>
        <position position="275"/>
    </location>
    <ligand>
        <name>acetyl-CoA</name>
        <dbReference type="ChEBI" id="CHEBI:57288"/>
    </ligand>
</feature>
<feature type="binding site" evidence="1">
    <location>
        <position position="312"/>
    </location>
    <ligand>
        <name>acetyl-CoA</name>
        <dbReference type="ChEBI" id="CHEBI:57288"/>
    </ligand>
</feature>
<feature type="binding site" evidence="1">
    <location>
        <position position="339"/>
    </location>
    <ligand>
        <name>glyoxylate</name>
        <dbReference type="ChEBI" id="CHEBI:36655"/>
    </ligand>
</feature>
<feature type="binding site" evidence="1">
    <location>
        <position position="428"/>
    </location>
    <ligand>
        <name>glyoxylate</name>
        <dbReference type="ChEBI" id="CHEBI:36655"/>
    </ligand>
</feature>
<feature type="binding site" evidence="1">
    <location>
        <position position="428"/>
    </location>
    <ligand>
        <name>Mg(2+)</name>
        <dbReference type="ChEBI" id="CHEBI:18420"/>
    </ligand>
</feature>
<feature type="binding site" evidence="1">
    <location>
        <begin position="453"/>
        <end position="456"/>
    </location>
    <ligand>
        <name>glyoxylate</name>
        <dbReference type="ChEBI" id="CHEBI:36655"/>
    </ligand>
</feature>
<feature type="binding site" evidence="1">
    <location>
        <position position="456"/>
    </location>
    <ligand>
        <name>Mg(2+)</name>
        <dbReference type="ChEBI" id="CHEBI:18420"/>
    </ligand>
</feature>
<feature type="binding site" evidence="1">
    <location>
        <position position="537"/>
    </location>
    <ligand>
        <name>acetyl-CoA</name>
        <dbReference type="ChEBI" id="CHEBI:57288"/>
    </ligand>
</feature>
<feature type="modified residue" description="Cysteine sulfenic acid (-SOH)" evidence="1">
    <location>
        <position position="618"/>
    </location>
</feature>
<name>MASZ_BORPE</name>